<reference key="1">
    <citation type="journal article" date="1996" name="Biochem. Biophys. Res. Commun.">
        <title>Cloning, characterization, and expression of the nitric oxide-generating nitrite reductase and of the blue copper protein genes of Achromobacter cycloclastes.</title>
        <authorList>
            <person name="Chen J.-Y."/>
            <person name="Chang W.-C."/>
            <person name="Chang T."/>
            <person name="Chang W.-C."/>
            <person name="Liu M.-Y."/>
            <person name="Payne W.J."/>
            <person name="le Gall J."/>
        </authorList>
    </citation>
    <scope>NUCLEOTIDE SEQUENCE [GENOMIC DNA]</scope>
    <source>
        <strain>ATCC 21921 / JCM 20009 / IAM 1013 / KCTC 2947 / LMG 1127 / NBRC 102459 / An-17</strain>
    </source>
</reference>
<reference key="2">
    <citation type="journal article" date="1991" name="Biochemistry">
        <title>Amino acid sequence of nitrite reductase: a copper protein from Achromobacter cycloclastes.</title>
        <authorList>
            <person name="Fenderson F.F."/>
            <person name="Kumar S."/>
            <person name="Adman E.T."/>
            <person name="Liu M.-Y."/>
            <person name="Payne W.J."/>
            <person name="le Gall J."/>
        </authorList>
    </citation>
    <scope>PROTEIN SEQUENCE OF 39-378</scope>
    <source>
        <strain>ATCC 21921 / JCM 20009 / IAM 1013 / KCTC 2947 / LMG 1127 / NBRC 102459 / An-17</strain>
    </source>
</reference>
<reference key="3">
    <citation type="journal article" date="1991" name="Science">
        <title>The 2.3-A X-ray structure of nitrite reductase from Achromobacter cycloclastes.</title>
        <authorList>
            <person name="Godden J.W."/>
            <person name="Turley S."/>
            <person name="Teller D.C."/>
            <person name="Adman E.T."/>
            <person name="Liu M.-Y."/>
            <person name="Payne W.J."/>
            <person name="le Gall J."/>
        </authorList>
    </citation>
    <scope>X-RAY CRYSTALLOGRAPHY (2.3 ANGSTROMS)</scope>
</reference>
<reference key="4">
    <citation type="journal article" date="1995" name="J. Biol. Chem.">
        <title>The structure of copper-nitrite reductase from Achromobacter cycloclastes at five pH values, with NO2-bound and with type II copper depleted.</title>
        <authorList>
            <person name="Adman E.T."/>
            <person name="Godden J.W."/>
            <person name="Turley S."/>
        </authorList>
    </citation>
    <scope>X-RAY CRYSTALLOGRAPHY (2.5 ANGSTROMS)</scope>
</reference>
<keyword id="KW-0002">3D-structure</keyword>
<keyword id="KW-0186">Copper</keyword>
<keyword id="KW-0903">Direct protein sequencing</keyword>
<keyword id="KW-0274">FAD</keyword>
<keyword id="KW-0285">Flavoprotein</keyword>
<keyword id="KW-0479">Metal-binding</keyword>
<keyword id="KW-0534">Nitrate assimilation</keyword>
<keyword id="KW-0560">Oxidoreductase</keyword>
<keyword id="KW-0574">Periplasm</keyword>
<keyword id="KW-0677">Repeat</keyword>
<keyword id="KW-0732">Signal</keyword>
<gene>
    <name type="primary">nirK</name>
</gene>
<comment type="catalytic activity">
    <reaction>
        <text>nitric oxide + Fe(III)-[cytochrome c] + H2O = Fe(II)-[cytochrome c] + nitrite + 2 H(+)</text>
        <dbReference type="Rhea" id="RHEA:15233"/>
        <dbReference type="Rhea" id="RHEA-COMP:10350"/>
        <dbReference type="Rhea" id="RHEA-COMP:14399"/>
        <dbReference type="ChEBI" id="CHEBI:15377"/>
        <dbReference type="ChEBI" id="CHEBI:15378"/>
        <dbReference type="ChEBI" id="CHEBI:16301"/>
        <dbReference type="ChEBI" id="CHEBI:16480"/>
        <dbReference type="ChEBI" id="CHEBI:29033"/>
        <dbReference type="ChEBI" id="CHEBI:29034"/>
        <dbReference type="EC" id="1.7.2.1"/>
    </reaction>
</comment>
<comment type="cofactor">
    <cofactor>
        <name>Cu(+)</name>
        <dbReference type="ChEBI" id="CHEBI:49552"/>
    </cofactor>
    <text>Binds 1 Cu(+) ion.</text>
</comment>
<comment type="cofactor">
    <cofactor>
        <name>Cu(2+)</name>
        <dbReference type="ChEBI" id="CHEBI:29036"/>
    </cofactor>
    <text>Binds 1 Cu(2+) ion.</text>
</comment>
<comment type="cofactor">
    <cofactor>
        <name>FAD</name>
        <dbReference type="ChEBI" id="CHEBI:57692"/>
    </cofactor>
</comment>
<comment type="pathway">
    <text>Nitrogen metabolism; nitrate reduction (denitrification); dinitrogen from nitrate: step 2/4.</text>
</comment>
<comment type="subunit">
    <text>Homotrimer.</text>
</comment>
<comment type="subcellular location">
    <subcellularLocation>
        <location>Periplasm</location>
    </subcellularLocation>
</comment>
<comment type="domain">
    <text>The type I copper site in NIR plays a crucial role for electron transfer from pseudoazurin to the type II copper site of NIR, which comprises the catalytic center of NIR for the reduction of nitrite.</text>
</comment>
<comment type="PTM">
    <text>Predicted to be exported by the Tat system. The position of the signal peptide cleavage has been experimentally proven.</text>
</comment>
<comment type="similarity">
    <text evidence="3">Belongs to the multicopper oxidase family.</text>
</comment>
<proteinExistence type="evidence at protein level"/>
<accession>P25006</accession>
<feature type="signal peptide" description="Tat-type signal" evidence="1 2">
    <location>
        <begin position="1"/>
        <end position="38"/>
    </location>
</feature>
<feature type="chain" id="PRO_0000002986" description="Copper-containing nitrite reductase">
    <location>
        <begin position="39"/>
        <end position="378"/>
    </location>
</feature>
<feature type="domain" description="Plastocyanin-like 1">
    <location>
        <begin position="39"/>
        <end position="213"/>
    </location>
</feature>
<feature type="domain" description="Plastocyanin-like 2">
    <location>
        <begin position="214"/>
        <end position="378"/>
    </location>
</feature>
<feature type="binding site" description="type 1 copper site">
    <location>
        <position position="133"/>
    </location>
    <ligand>
        <name>Cu cation</name>
        <dbReference type="ChEBI" id="CHEBI:23378"/>
        <label>1</label>
    </ligand>
</feature>
<feature type="binding site" description="type 2 copper site">
    <location>
        <position position="138"/>
    </location>
    <ligand>
        <name>Cu cation</name>
        <dbReference type="ChEBI" id="CHEBI:23378"/>
        <label>2</label>
    </ligand>
</feature>
<feature type="binding site" description="type 2 copper site">
    <location>
        <position position="173"/>
    </location>
    <ligand>
        <name>Cu cation</name>
        <dbReference type="ChEBI" id="CHEBI:23378"/>
        <label>2</label>
    </ligand>
</feature>
<feature type="binding site" description="type 1 copper site">
    <location>
        <position position="174"/>
    </location>
    <ligand>
        <name>Cu cation</name>
        <dbReference type="ChEBI" id="CHEBI:23378"/>
        <label>1</label>
    </ligand>
</feature>
<feature type="binding site" description="type 1 copper site">
    <location>
        <position position="183"/>
    </location>
    <ligand>
        <name>Cu cation</name>
        <dbReference type="ChEBI" id="CHEBI:23378"/>
        <label>1</label>
    </ligand>
</feature>
<feature type="binding site" description="type 1 copper site">
    <location>
        <position position="188"/>
    </location>
    <ligand>
        <name>Cu cation</name>
        <dbReference type="ChEBI" id="CHEBI:23378"/>
        <label>1</label>
    </ligand>
</feature>
<feature type="binding site" description="type 2 copper site">
    <location>
        <position position="344"/>
    </location>
    <ligand>
        <name>Cu cation</name>
        <dbReference type="ChEBI" id="CHEBI:23378"/>
        <label>2</label>
    </ligand>
</feature>
<feature type="helix" evidence="6">
    <location>
        <begin position="47"/>
        <end position="49"/>
    </location>
</feature>
<feature type="strand" evidence="6">
    <location>
        <begin position="52"/>
        <end position="54"/>
    </location>
</feature>
<feature type="strand" evidence="6">
    <location>
        <begin position="71"/>
        <end position="73"/>
    </location>
</feature>
<feature type="strand" evidence="6">
    <location>
        <begin position="76"/>
        <end position="89"/>
    </location>
</feature>
<feature type="strand" evidence="8">
    <location>
        <begin position="91"/>
        <end position="93"/>
    </location>
</feature>
<feature type="strand" evidence="6">
    <location>
        <begin position="96"/>
        <end position="102"/>
    </location>
</feature>
<feature type="strand" evidence="6">
    <location>
        <begin position="105"/>
        <end position="107"/>
    </location>
</feature>
<feature type="strand" evidence="6">
    <location>
        <begin position="111"/>
        <end position="114"/>
    </location>
</feature>
<feature type="strand" evidence="6">
    <location>
        <begin position="118"/>
        <end position="125"/>
    </location>
</feature>
<feature type="strand" evidence="5">
    <location>
        <begin position="135"/>
        <end position="140"/>
    </location>
</feature>
<feature type="helix" evidence="6">
    <location>
        <begin position="143"/>
        <end position="149"/>
    </location>
</feature>
<feature type="strand" evidence="6">
    <location>
        <begin position="156"/>
        <end position="163"/>
    </location>
</feature>
<feature type="strand" evidence="6">
    <location>
        <begin position="168"/>
        <end position="173"/>
    </location>
</feature>
<feature type="turn" evidence="5">
    <location>
        <begin position="177"/>
        <end position="179"/>
    </location>
</feature>
<feature type="helix" evidence="6">
    <location>
        <begin position="180"/>
        <end position="185"/>
    </location>
</feature>
<feature type="strand" evidence="6">
    <location>
        <begin position="189"/>
        <end position="195"/>
    </location>
</feature>
<feature type="strand" evidence="8">
    <location>
        <begin position="203"/>
        <end position="205"/>
    </location>
</feature>
<feature type="strand" evidence="6">
    <location>
        <begin position="211"/>
        <end position="221"/>
    </location>
</feature>
<feature type="strand" evidence="7">
    <location>
        <begin position="227"/>
        <end position="229"/>
    </location>
</feature>
<feature type="helix" evidence="6">
    <location>
        <begin position="237"/>
        <end position="249"/>
    </location>
</feature>
<feature type="strand" evidence="6">
    <location>
        <begin position="254"/>
        <end position="258"/>
    </location>
</feature>
<feature type="turn" evidence="6">
    <location>
        <begin position="262"/>
        <end position="265"/>
    </location>
</feature>
<feature type="helix" evidence="6">
    <location>
        <begin position="267"/>
        <end position="269"/>
    </location>
</feature>
<feature type="strand" evidence="6">
    <location>
        <begin position="271"/>
        <end position="274"/>
    </location>
</feature>
<feature type="strand" evidence="6">
    <location>
        <begin position="278"/>
        <end position="288"/>
    </location>
</feature>
<feature type="strand" evidence="6">
    <location>
        <begin position="292"/>
        <end position="295"/>
    </location>
</feature>
<feature type="strand" evidence="6">
    <location>
        <begin position="299"/>
        <end position="303"/>
    </location>
</feature>
<feature type="strand" evidence="6">
    <location>
        <begin position="313"/>
        <end position="317"/>
    </location>
</feature>
<feature type="strand" evidence="6">
    <location>
        <begin position="325"/>
        <end position="332"/>
    </location>
</feature>
<feature type="strand" evidence="6">
    <location>
        <begin position="337"/>
        <end position="345"/>
    </location>
</feature>
<feature type="helix" evidence="6">
    <location>
        <begin position="346"/>
        <end position="350"/>
    </location>
</feature>
<feature type="strand" evidence="6">
    <location>
        <begin position="355"/>
        <end position="362"/>
    </location>
</feature>
<feature type="turn" evidence="6">
    <location>
        <begin position="366"/>
        <end position="368"/>
    </location>
</feature>
<feature type="strand" evidence="4">
    <location>
        <begin position="369"/>
        <end position="371"/>
    </location>
</feature>
<organism>
    <name type="scientific">Achromobacter cycloclastes</name>
    <dbReference type="NCBI Taxonomy" id="223"/>
    <lineage>
        <taxon>Bacteria</taxon>
        <taxon>Pseudomonadati</taxon>
        <taxon>Pseudomonadota</taxon>
        <taxon>Betaproteobacteria</taxon>
        <taxon>Burkholderiales</taxon>
        <taxon>Alcaligenaceae</taxon>
        <taxon>Achromobacter</taxon>
    </lineage>
</organism>
<dbReference type="EC" id="1.7.2.1"/>
<dbReference type="EMBL" id="Z48635">
    <property type="protein sequence ID" value="CAA88564.1"/>
    <property type="molecule type" value="Genomic_DNA"/>
</dbReference>
<dbReference type="PIR" id="JC4648">
    <property type="entry name" value="JC4648"/>
</dbReference>
<dbReference type="PDB" id="1KCB">
    <property type="method" value="X-ray"/>
    <property type="resolution" value="1.65 A"/>
    <property type="chains" value="A=39-378"/>
</dbReference>
<dbReference type="PDB" id="1NIA">
    <property type="method" value="X-ray"/>
    <property type="resolution" value="2.50 A"/>
    <property type="chains" value="A/B/C=39-378"/>
</dbReference>
<dbReference type="PDB" id="1NIB">
    <property type="method" value="X-ray"/>
    <property type="resolution" value="2.70 A"/>
    <property type="chains" value="A/B/C=39-378"/>
</dbReference>
<dbReference type="PDB" id="1NIC">
    <property type="method" value="X-ray"/>
    <property type="resolution" value="1.90 A"/>
    <property type="chains" value="A=39-378"/>
</dbReference>
<dbReference type="PDB" id="1NID">
    <property type="method" value="X-ray"/>
    <property type="resolution" value="2.20 A"/>
    <property type="chains" value="A=39-378"/>
</dbReference>
<dbReference type="PDB" id="1NIE">
    <property type="method" value="X-ray"/>
    <property type="resolution" value="1.90 A"/>
    <property type="chains" value="A=39-378"/>
</dbReference>
<dbReference type="PDB" id="1NIF">
    <property type="method" value="X-ray"/>
    <property type="resolution" value="1.70 A"/>
    <property type="chains" value="A=39-378"/>
</dbReference>
<dbReference type="PDB" id="1RZP">
    <property type="method" value="X-ray"/>
    <property type="resolution" value="1.90 A"/>
    <property type="chains" value="A/B/C=39-373"/>
</dbReference>
<dbReference type="PDB" id="1RZQ">
    <property type="method" value="X-ray"/>
    <property type="resolution" value="2.20 A"/>
    <property type="chains" value="A/B/C=39-373"/>
</dbReference>
<dbReference type="PDB" id="2AVF">
    <property type="method" value="X-ray"/>
    <property type="resolution" value="2.60 A"/>
    <property type="chains" value="A/B/C/D/E/F=39-367"/>
</dbReference>
<dbReference type="PDB" id="2BW4">
    <property type="method" value="X-ray"/>
    <property type="resolution" value="0.90 A"/>
    <property type="chains" value="A=39-378"/>
</dbReference>
<dbReference type="PDB" id="2BW5">
    <property type="method" value="X-ray"/>
    <property type="resolution" value="1.12 A"/>
    <property type="chains" value="A=39-378"/>
</dbReference>
<dbReference type="PDB" id="2BWD">
    <property type="method" value="X-ray"/>
    <property type="resolution" value="1.15 A"/>
    <property type="chains" value="A=39-378"/>
</dbReference>
<dbReference type="PDB" id="2BWI">
    <property type="method" value="X-ray"/>
    <property type="resolution" value="1.10 A"/>
    <property type="chains" value="A=39-378"/>
</dbReference>
<dbReference type="PDB" id="2NRD">
    <property type="method" value="X-ray"/>
    <property type="resolution" value="2.10 A"/>
    <property type="chains" value="A=39-378"/>
</dbReference>
<dbReference type="PDB" id="2Y1A">
    <property type="method" value="X-ray"/>
    <property type="resolution" value="1.95 A"/>
    <property type="chains" value="A=39-378"/>
</dbReference>
<dbReference type="PDB" id="5AKR">
    <property type="method" value="X-ray"/>
    <property type="resolution" value="0.87 A"/>
    <property type="chains" value="A=1-378"/>
</dbReference>
<dbReference type="PDB" id="5I6K">
    <property type="method" value="X-ray"/>
    <property type="resolution" value="1.07 A"/>
    <property type="chains" value="A=45-378"/>
</dbReference>
<dbReference type="PDB" id="5I6L">
    <property type="method" value="X-ray"/>
    <property type="resolution" value="1.08 A"/>
    <property type="chains" value="A=46-377"/>
</dbReference>
<dbReference type="PDB" id="5I6M">
    <property type="method" value="X-ray"/>
    <property type="resolution" value="1.09 A"/>
    <property type="chains" value="A=46-377"/>
</dbReference>
<dbReference type="PDB" id="5I6N">
    <property type="method" value="X-ray"/>
    <property type="resolution" value="1.22 A"/>
    <property type="chains" value="A=46-377"/>
</dbReference>
<dbReference type="PDB" id="5I6O">
    <property type="method" value="X-ray"/>
    <property type="resolution" value="1.45 A"/>
    <property type="chains" value="A=46-377"/>
</dbReference>
<dbReference type="PDB" id="5I6P">
    <property type="method" value="X-ray"/>
    <property type="resolution" value="1.56 A"/>
    <property type="chains" value="A=46-377"/>
</dbReference>
<dbReference type="PDB" id="5N8F">
    <property type="method" value="X-ray"/>
    <property type="resolution" value="1.38 A"/>
    <property type="chains" value="A=45-378"/>
</dbReference>
<dbReference type="PDB" id="5N8G">
    <property type="method" value="X-ray"/>
    <property type="resolution" value="1.47 A"/>
    <property type="chains" value="A=45-378"/>
</dbReference>
<dbReference type="PDB" id="5N8H">
    <property type="method" value="X-ray"/>
    <property type="resolution" value="1.65 A"/>
    <property type="chains" value="A=45-378"/>
</dbReference>
<dbReference type="PDB" id="5N8I">
    <property type="method" value="X-ray"/>
    <property type="resolution" value="1.40 A"/>
    <property type="chains" value="A=45-378"/>
</dbReference>
<dbReference type="PDB" id="5OF5">
    <property type="method" value="X-ray"/>
    <property type="resolution" value="1.08 A"/>
    <property type="chains" value="A=45-378"/>
</dbReference>
<dbReference type="PDB" id="5OF6">
    <property type="method" value="X-ray"/>
    <property type="resolution" value="1.08 A"/>
    <property type="chains" value="A=45-378"/>
</dbReference>
<dbReference type="PDB" id="5OF7">
    <property type="method" value="X-ray"/>
    <property type="resolution" value="1.27 A"/>
    <property type="chains" value="A=45-378"/>
</dbReference>
<dbReference type="PDB" id="5OF8">
    <property type="method" value="X-ray"/>
    <property type="resolution" value="1.34 A"/>
    <property type="chains" value="A=45-378"/>
</dbReference>
<dbReference type="PDB" id="5OFC">
    <property type="method" value="X-ray"/>
    <property type="resolution" value="1.68 A"/>
    <property type="chains" value="A=45-378"/>
</dbReference>
<dbReference type="PDB" id="5OFD">
    <property type="method" value="X-ray"/>
    <property type="resolution" value="1.77 A"/>
    <property type="chains" value="A=45-378"/>
</dbReference>
<dbReference type="PDB" id="5OFE">
    <property type="method" value="X-ray"/>
    <property type="resolution" value="1.84 A"/>
    <property type="chains" value="A=45-378"/>
</dbReference>
<dbReference type="PDB" id="5OFF">
    <property type="method" value="X-ray"/>
    <property type="resolution" value="1.41 A"/>
    <property type="chains" value="A=45-378"/>
</dbReference>
<dbReference type="PDB" id="5OFG">
    <property type="method" value="X-ray"/>
    <property type="resolution" value="1.49 A"/>
    <property type="chains" value="A=45-378"/>
</dbReference>
<dbReference type="PDB" id="5OFH">
    <property type="method" value="X-ray"/>
    <property type="resolution" value="1.58 A"/>
    <property type="chains" value="A=45-378"/>
</dbReference>
<dbReference type="PDB" id="5OG2">
    <property type="method" value="X-ray"/>
    <property type="resolution" value="1.64 A"/>
    <property type="chains" value="A=45-378"/>
</dbReference>
<dbReference type="PDB" id="5OG3">
    <property type="method" value="X-ray"/>
    <property type="resolution" value="1.70 A"/>
    <property type="chains" value="A=45-378"/>
</dbReference>
<dbReference type="PDB" id="5OG4">
    <property type="method" value="X-ray"/>
    <property type="resolution" value="1.76 A"/>
    <property type="chains" value="A=45-378"/>
</dbReference>
<dbReference type="PDB" id="5OG5">
    <property type="method" value="X-ray"/>
    <property type="resolution" value="1.82 A"/>
    <property type="chains" value="A=45-378"/>
</dbReference>
<dbReference type="PDB" id="5OG6">
    <property type="method" value="X-ray"/>
    <property type="resolution" value="1.85 A"/>
    <property type="chains" value="A=45-378"/>
</dbReference>
<dbReference type="PDB" id="5OGF">
    <property type="method" value="X-ray"/>
    <property type="resolution" value="1.88 A"/>
    <property type="chains" value="A=46-378"/>
</dbReference>
<dbReference type="PDB" id="5OGG">
    <property type="method" value="X-ray"/>
    <property type="resolution" value="1.91 A"/>
    <property type="chains" value="A=45-378"/>
</dbReference>
<dbReference type="PDB" id="6GB8">
    <property type="method" value="X-ray"/>
    <property type="resolution" value="1.48 A"/>
    <property type="chains" value="A=39-378"/>
</dbReference>
<dbReference type="PDB" id="6GBB">
    <property type="method" value="X-ray"/>
    <property type="resolution" value="1.48 A"/>
    <property type="chains" value="A=39-378"/>
</dbReference>
<dbReference type="PDB" id="6GBY">
    <property type="method" value="X-ray"/>
    <property type="resolution" value="1.48 A"/>
    <property type="chains" value="A=1-378"/>
</dbReference>
<dbReference type="PDB" id="6GCG">
    <property type="method" value="X-ray"/>
    <property type="resolution" value="1.80 A"/>
    <property type="chains" value="A=1-378"/>
</dbReference>
<dbReference type="PDB" id="6GSQ">
    <property type="method" value="X-ray"/>
    <property type="resolution" value="1.50 A"/>
    <property type="chains" value="A=1-378"/>
</dbReference>
<dbReference type="PDB" id="6GT0">
    <property type="method" value="X-ray"/>
    <property type="resolution" value="1.50 A"/>
    <property type="chains" value="A=1-378"/>
</dbReference>
<dbReference type="PDB" id="6GT2">
    <property type="method" value="X-ray"/>
    <property type="resolution" value="1.60 A"/>
    <property type="chains" value="A=1-378"/>
</dbReference>
<dbReference type="PDB" id="6GTI">
    <property type="method" value="X-ray"/>
    <property type="resolution" value="1.50 A"/>
    <property type="chains" value="A=1-378"/>
</dbReference>
<dbReference type="PDB" id="6GTJ">
    <property type="method" value="Neutron"/>
    <property type="resolution" value="1.80 A"/>
    <property type="chains" value="A=39-378"/>
</dbReference>
<dbReference type="PDB" id="6GTK">
    <property type="method" value="X-ray"/>
    <property type="resolution" value="1.50 A"/>
    <property type="chains" value="A=1-378"/>
</dbReference>
<dbReference type="PDB" id="6GTL">
    <property type="method" value="X-ray"/>
    <property type="resolution" value="1.50 A"/>
    <property type="chains" value="A=1-378"/>
</dbReference>
<dbReference type="PDB" id="6GTN">
    <property type="method" value="X-ray"/>
    <property type="resolution" value="1.50 A"/>
    <property type="chains" value="A=1-378"/>
</dbReference>
<dbReference type="PDB" id="6KNF">
    <property type="method" value="EM"/>
    <property type="resolution" value="2.99 A"/>
    <property type="chains" value="A/B/C=45-378"/>
</dbReference>
<dbReference type="PDB" id="6KNG">
    <property type="method" value="EM"/>
    <property type="resolution" value="2.85 A"/>
    <property type="chains" value="A/B/C=45-378"/>
</dbReference>
<dbReference type="PDB" id="6QWG">
    <property type="method" value="X-ray"/>
    <property type="resolution" value="1.90 A"/>
    <property type="chains" value="A=46-378"/>
</dbReference>
<dbReference type="PDB" id="6ZU6">
    <property type="method" value="X-ray"/>
    <property type="resolution" value="1.15 A"/>
    <property type="chains" value="A=45-378"/>
</dbReference>
<dbReference type="PDB" id="6ZUA">
    <property type="method" value="X-ray"/>
    <property type="resolution" value="1.14 A"/>
    <property type="chains" value="A=45-378"/>
</dbReference>
<dbReference type="PDB" id="6ZUB">
    <property type="method" value="X-ray"/>
    <property type="resolution" value="1.08 A"/>
    <property type="chains" value="A=45-378"/>
</dbReference>
<dbReference type="PDB" id="6ZUD">
    <property type="method" value="X-ray"/>
    <property type="resolution" value="1.10 A"/>
    <property type="chains" value="A=45-378"/>
</dbReference>
<dbReference type="PDB" id="6ZUT">
    <property type="method" value="X-ray"/>
    <property type="resolution" value="1.15 A"/>
    <property type="chains" value="A=45-378"/>
</dbReference>
<dbReference type="PDBsum" id="1KCB"/>
<dbReference type="PDBsum" id="1NIA"/>
<dbReference type="PDBsum" id="1NIB"/>
<dbReference type="PDBsum" id="1NIC"/>
<dbReference type="PDBsum" id="1NID"/>
<dbReference type="PDBsum" id="1NIE"/>
<dbReference type="PDBsum" id="1NIF"/>
<dbReference type="PDBsum" id="1RZP"/>
<dbReference type="PDBsum" id="1RZQ"/>
<dbReference type="PDBsum" id="2AVF"/>
<dbReference type="PDBsum" id="2BW4"/>
<dbReference type="PDBsum" id="2BW5"/>
<dbReference type="PDBsum" id="2BWD"/>
<dbReference type="PDBsum" id="2BWI"/>
<dbReference type="PDBsum" id="2NRD"/>
<dbReference type="PDBsum" id="2Y1A"/>
<dbReference type="PDBsum" id="5AKR"/>
<dbReference type="PDBsum" id="5I6K"/>
<dbReference type="PDBsum" id="5I6L"/>
<dbReference type="PDBsum" id="5I6M"/>
<dbReference type="PDBsum" id="5I6N"/>
<dbReference type="PDBsum" id="5I6O"/>
<dbReference type="PDBsum" id="5I6P"/>
<dbReference type="PDBsum" id="5N8F"/>
<dbReference type="PDBsum" id="5N8G"/>
<dbReference type="PDBsum" id="5N8H"/>
<dbReference type="PDBsum" id="5N8I"/>
<dbReference type="PDBsum" id="5OF5"/>
<dbReference type="PDBsum" id="5OF6"/>
<dbReference type="PDBsum" id="5OF7"/>
<dbReference type="PDBsum" id="5OF8"/>
<dbReference type="PDBsum" id="5OFC"/>
<dbReference type="PDBsum" id="5OFD"/>
<dbReference type="PDBsum" id="5OFE"/>
<dbReference type="PDBsum" id="5OFF"/>
<dbReference type="PDBsum" id="5OFG"/>
<dbReference type="PDBsum" id="5OFH"/>
<dbReference type="PDBsum" id="5OG2"/>
<dbReference type="PDBsum" id="5OG3"/>
<dbReference type="PDBsum" id="5OG4"/>
<dbReference type="PDBsum" id="5OG5"/>
<dbReference type="PDBsum" id="5OG6"/>
<dbReference type="PDBsum" id="5OGF"/>
<dbReference type="PDBsum" id="5OGG"/>
<dbReference type="PDBsum" id="6GB8"/>
<dbReference type="PDBsum" id="6GBB"/>
<dbReference type="PDBsum" id="6GBY"/>
<dbReference type="PDBsum" id="6GCG"/>
<dbReference type="PDBsum" id="6GSQ"/>
<dbReference type="PDBsum" id="6GT0"/>
<dbReference type="PDBsum" id="6GT2"/>
<dbReference type="PDBsum" id="6GTI"/>
<dbReference type="PDBsum" id="6GTJ"/>
<dbReference type="PDBsum" id="6GTK"/>
<dbReference type="PDBsum" id="6GTL"/>
<dbReference type="PDBsum" id="6GTN"/>
<dbReference type="PDBsum" id="6KNF"/>
<dbReference type="PDBsum" id="6KNG"/>
<dbReference type="PDBsum" id="6QWG"/>
<dbReference type="PDBsum" id="6ZU6"/>
<dbReference type="PDBsum" id="6ZUA"/>
<dbReference type="PDBsum" id="6ZUB"/>
<dbReference type="PDBsum" id="6ZUD"/>
<dbReference type="PDBsum" id="6ZUT"/>
<dbReference type="EMDB" id="EMD-0730"/>
<dbReference type="EMDB" id="EMD-0731"/>
<dbReference type="SMR" id="P25006"/>
<dbReference type="DrugBank" id="DB03814">
    <property type="generic name" value="2-(N-morpholino)ethanesulfonic acid"/>
</dbReference>
<dbReference type="KEGG" id="ag:CAA88564"/>
<dbReference type="BRENDA" id="1.7.2.1">
    <property type="organism ID" value="69"/>
</dbReference>
<dbReference type="SABIO-RK" id="P25006"/>
<dbReference type="UniPathway" id="UPA00652">
    <property type="reaction ID" value="UER00707"/>
</dbReference>
<dbReference type="EvolutionaryTrace" id="P25006"/>
<dbReference type="GO" id="GO:0042597">
    <property type="term" value="C:periplasmic space"/>
    <property type="evidence" value="ECO:0007669"/>
    <property type="project" value="UniProtKB-SubCell"/>
</dbReference>
<dbReference type="GO" id="GO:0005507">
    <property type="term" value="F:copper ion binding"/>
    <property type="evidence" value="ECO:0007669"/>
    <property type="project" value="InterPro"/>
</dbReference>
<dbReference type="GO" id="GO:0050421">
    <property type="term" value="F:nitrite reductase (NO-forming) activity"/>
    <property type="evidence" value="ECO:0007669"/>
    <property type="project" value="UniProtKB-EC"/>
</dbReference>
<dbReference type="GO" id="GO:0019333">
    <property type="term" value="P:denitrification pathway"/>
    <property type="evidence" value="ECO:0007669"/>
    <property type="project" value="UniProtKB-UniPathway"/>
</dbReference>
<dbReference type="GO" id="GO:0042128">
    <property type="term" value="P:nitrate assimilation"/>
    <property type="evidence" value="ECO:0007669"/>
    <property type="project" value="UniProtKB-KW"/>
</dbReference>
<dbReference type="CDD" id="cd11020">
    <property type="entry name" value="CuRO_1_CuNIR"/>
    <property type="match status" value="1"/>
</dbReference>
<dbReference type="Gene3D" id="2.60.40.420">
    <property type="entry name" value="Cupredoxins - blue copper proteins"/>
    <property type="match status" value="2"/>
</dbReference>
<dbReference type="InterPro" id="IPR011707">
    <property type="entry name" value="Cu-oxidase-like_N"/>
</dbReference>
<dbReference type="InterPro" id="IPR001117">
    <property type="entry name" value="Cu-oxidase_2nd"/>
</dbReference>
<dbReference type="InterPro" id="IPR045087">
    <property type="entry name" value="Cu-oxidase_fam"/>
</dbReference>
<dbReference type="InterPro" id="IPR008972">
    <property type="entry name" value="Cupredoxin"/>
</dbReference>
<dbReference type="InterPro" id="IPR001287">
    <property type="entry name" value="NO2-reductase_Cu"/>
</dbReference>
<dbReference type="InterPro" id="IPR006311">
    <property type="entry name" value="TAT_signal"/>
</dbReference>
<dbReference type="NCBIfam" id="TIGR02376">
    <property type="entry name" value="Cu_nitrite_red"/>
    <property type="match status" value="1"/>
</dbReference>
<dbReference type="PANTHER" id="PTHR11709:SF394">
    <property type="entry name" value="FI03373P-RELATED"/>
    <property type="match status" value="1"/>
</dbReference>
<dbReference type="PANTHER" id="PTHR11709">
    <property type="entry name" value="MULTI-COPPER OXIDASE"/>
    <property type="match status" value="1"/>
</dbReference>
<dbReference type="Pfam" id="PF00394">
    <property type="entry name" value="Cu-oxidase"/>
    <property type="match status" value="1"/>
</dbReference>
<dbReference type="Pfam" id="PF07732">
    <property type="entry name" value="Cu-oxidase_3"/>
    <property type="match status" value="1"/>
</dbReference>
<dbReference type="PRINTS" id="PR00695">
    <property type="entry name" value="CUNO2RDTASE"/>
</dbReference>
<dbReference type="SUPFAM" id="SSF49503">
    <property type="entry name" value="Cupredoxins"/>
    <property type="match status" value="2"/>
</dbReference>
<dbReference type="PROSITE" id="PS51318">
    <property type="entry name" value="TAT"/>
    <property type="match status" value="1"/>
</dbReference>
<sequence length="378" mass="40771">MTEQLQMTRRTMLAGAALAGAVAPLLHTAQAHAAGAAAAAGAAPVDISTLPRVKVDLVKPPFVHAHDQVAKTGPRVVEFTMTIEEKKLVIDREGTEIHAMTFNGSVPGPLMVVHENDYVELRLINPDTNTLLHNIDFHAATGALGGGALTQVNPGEETTLRFKATKPGVFVYHCAPEGMVPWHVTSGMNGAIMVLPRDGLKDEKGQPLTYDKIYYVGEQDFYVPKDEAGNYKKYETPGEAYEDAVKAMRTLTPTHIVFNGAVGALTGDHALTAAVGERVLVVHSQANRDTRPHLIGGHGDYVWATGKFRNPPDLDQETWLIPGGTAGAAFYTFRQPGVYAYVNHNLIEAFELGAAGHFKVTGEWNDDLMTSVVKPASM</sequence>
<evidence type="ECO:0000255" key="1">
    <source>
        <dbReference type="PROSITE-ProRule" id="PRU00648"/>
    </source>
</evidence>
<evidence type="ECO:0000269" key="2">
    <source>
    </source>
</evidence>
<evidence type="ECO:0000305" key="3"/>
<evidence type="ECO:0007829" key="4">
    <source>
        <dbReference type="PDB" id="1RZP"/>
    </source>
</evidence>
<evidence type="ECO:0007829" key="5">
    <source>
        <dbReference type="PDB" id="2AVF"/>
    </source>
</evidence>
<evidence type="ECO:0007829" key="6">
    <source>
        <dbReference type="PDB" id="5AKR"/>
    </source>
</evidence>
<evidence type="ECO:0007829" key="7">
    <source>
        <dbReference type="PDB" id="5N8I"/>
    </source>
</evidence>
<evidence type="ECO:0007829" key="8">
    <source>
        <dbReference type="PDB" id="6KNG"/>
    </source>
</evidence>
<name>NIR_ACHCY</name>
<protein>
    <recommendedName>
        <fullName>Copper-containing nitrite reductase</fullName>
        <ecNumber>1.7.2.1</ecNumber>
    </recommendedName>
    <alternativeName>
        <fullName>Cu-NIR</fullName>
    </alternativeName>
</protein>